<dbReference type="EMBL" id="BX936398">
    <property type="protein sequence ID" value="CAH22770.1"/>
    <property type="molecule type" value="Genomic_DNA"/>
</dbReference>
<dbReference type="SMR" id="Q665I5"/>
<dbReference type="KEGG" id="yps:YPTB3532"/>
<dbReference type="Proteomes" id="UP000001011">
    <property type="component" value="Chromosome"/>
</dbReference>
<dbReference type="GO" id="GO:0009347">
    <property type="term" value="C:aspartate carbamoyltransferase complex"/>
    <property type="evidence" value="ECO:0007669"/>
    <property type="project" value="InterPro"/>
</dbReference>
<dbReference type="GO" id="GO:0046872">
    <property type="term" value="F:metal ion binding"/>
    <property type="evidence" value="ECO:0007669"/>
    <property type="project" value="UniProtKB-KW"/>
</dbReference>
<dbReference type="GO" id="GO:0006207">
    <property type="term" value="P:'de novo' pyrimidine nucleobase biosynthetic process"/>
    <property type="evidence" value="ECO:0007669"/>
    <property type="project" value="InterPro"/>
</dbReference>
<dbReference type="GO" id="GO:0006221">
    <property type="term" value="P:pyrimidine nucleotide biosynthetic process"/>
    <property type="evidence" value="ECO:0007669"/>
    <property type="project" value="UniProtKB-UniRule"/>
</dbReference>
<dbReference type="FunFam" id="3.30.70.140:FF:000001">
    <property type="entry name" value="Aspartate carbamoyltransferase regulatory chain"/>
    <property type="match status" value="1"/>
</dbReference>
<dbReference type="Gene3D" id="2.30.30.20">
    <property type="entry name" value="Aspartate carbamoyltransferase regulatory subunit, C-terminal domain"/>
    <property type="match status" value="1"/>
</dbReference>
<dbReference type="Gene3D" id="3.30.70.140">
    <property type="entry name" value="Aspartate carbamoyltransferase regulatory subunit, N-terminal domain"/>
    <property type="match status" value="1"/>
</dbReference>
<dbReference type="HAMAP" id="MF_00002">
    <property type="entry name" value="Asp_carb_tr_reg"/>
    <property type="match status" value="1"/>
</dbReference>
<dbReference type="InterPro" id="IPR020545">
    <property type="entry name" value="Asp_carbamoyltransf_reg_N"/>
</dbReference>
<dbReference type="InterPro" id="IPR002801">
    <property type="entry name" value="Asp_carbamoylTrfase_reg"/>
</dbReference>
<dbReference type="InterPro" id="IPR020542">
    <property type="entry name" value="Asp_carbamoyltrfase_reg_C"/>
</dbReference>
<dbReference type="InterPro" id="IPR036792">
    <property type="entry name" value="Asp_carbatrfase_reg_C_sf"/>
</dbReference>
<dbReference type="InterPro" id="IPR036793">
    <property type="entry name" value="Asp_carbatrfase_reg_N_sf"/>
</dbReference>
<dbReference type="NCBIfam" id="TIGR00240">
    <property type="entry name" value="ATCase_reg"/>
    <property type="match status" value="1"/>
</dbReference>
<dbReference type="PANTHER" id="PTHR35805">
    <property type="entry name" value="ASPARTATE CARBAMOYLTRANSFERASE REGULATORY CHAIN"/>
    <property type="match status" value="1"/>
</dbReference>
<dbReference type="PANTHER" id="PTHR35805:SF1">
    <property type="entry name" value="ASPARTATE CARBAMOYLTRANSFERASE REGULATORY CHAIN"/>
    <property type="match status" value="1"/>
</dbReference>
<dbReference type="Pfam" id="PF01948">
    <property type="entry name" value="PyrI"/>
    <property type="match status" value="1"/>
</dbReference>
<dbReference type="Pfam" id="PF02748">
    <property type="entry name" value="PyrI_C"/>
    <property type="match status" value="1"/>
</dbReference>
<dbReference type="SUPFAM" id="SSF57825">
    <property type="entry name" value="Aspartate carbamoyltransferase, Regulatory-chain, C-terminal domain"/>
    <property type="match status" value="1"/>
</dbReference>
<dbReference type="SUPFAM" id="SSF54893">
    <property type="entry name" value="Aspartate carbamoyltransferase, Regulatory-chain, N-terminal domain"/>
    <property type="match status" value="1"/>
</dbReference>
<sequence>MMTQDYKLQVEAIKCGTVIDHIPAQIGFKLLSLFKLTATDQRITIGLNLPSKRSGRKDLIKIENTFLTEQQANQLAMYAPDATVNRIDNYEVVKKLTLSLPERIDAVLTCPNSNCISHNEPVDSSFTVKAQRGEISLKCKYCEKEFDHLAVLHAD</sequence>
<keyword id="KW-0479">Metal-binding</keyword>
<keyword id="KW-0665">Pyrimidine biosynthesis</keyword>
<keyword id="KW-0862">Zinc</keyword>
<evidence type="ECO:0000255" key="1">
    <source>
        <dbReference type="HAMAP-Rule" id="MF_00002"/>
    </source>
</evidence>
<organism>
    <name type="scientific">Yersinia pseudotuberculosis serotype I (strain IP32953)</name>
    <dbReference type="NCBI Taxonomy" id="273123"/>
    <lineage>
        <taxon>Bacteria</taxon>
        <taxon>Pseudomonadati</taxon>
        <taxon>Pseudomonadota</taxon>
        <taxon>Gammaproteobacteria</taxon>
        <taxon>Enterobacterales</taxon>
        <taxon>Yersiniaceae</taxon>
        <taxon>Yersinia</taxon>
    </lineage>
</organism>
<comment type="function">
    <text evidence="1">Involved in allosteric regulation of aspartate carbamoyltransferase.</text>
</comment>
<comment type="cofactor">
    <cofactor evidence="1">
        <name>Zn(2+)</name>
        <dbReference type="ChEBI" id="CHEBI:29105"/>
    </cofactor>
    <text evidence="1">Binds 1 zinc ion per subunit.</text>
</comment>
<comment type="subunit">
    <text evidence="1">Contains catalytic and regulatory chains.</text>
</comment>
<comment type="similarity">
    <text evidence="1">Belongs to the PyrI family.</text>
</comment>
<name>PYRI_YERPS</name>
<protein>
    <recommendedName>
        <fullName evidence="1">Aspartate carbamoyltransferase regulatory chain</fullName>
    </recommendedName>
</protein>
<reference key="1">
    <citation type="journal article" date="2004" name="Proc. Natl. Acad. Sci. U.S.A.">
        <title>Insights into the evolution of Yersinia pestis through whole-genome comparison with Yersinia pseudotuberculosis.</title>
        <authorList>
            <person name="Chain P.S.G."/>
            <person name="Carniel E."/>
            <person name="Larimer F.W."/>
            <person name="Lamerdin J."/>
            <person name="Stoutland P.O."/>
            <person name="Regala W.M."/>
            <person name="Georgescu A.M."/>
            <person name="Vergez L.M."/>
            <person name="Land M.L."/>
            <person name="Motin V.L."/>
            <person name="Brubaker R.R."/>
            <person name="Fowler J."/>
            <person name="Hinnebusch J."/>
            <person name="Marceau M."/>
            <person name="Medigue C."/>
            <person name="Simonet M."/>
            <person name="Chenal-Francisque V."/>
            <person name="Souza B."/>
            <person name="Dacheux D."/>
            <person name="Elliott J.M."/>
            <person name="Derbise A."/>
            <person name="Hauser L.J."/>
            <person name="Garcia E."/>
        </authorList>
    </citation>
    <scope>NUCLEOTIDE SEQUENCE [LARGE SCALE GENOMIC DNA]</scope>
    <source>
        <strain>IP32953</strain>
    </source>
</reference>
<proteinExistence type="inferred from homology"/>
<feature type="chain" id="PRO_0000142325" description="Aspartate carbamoyltransferase regulatory chain">
    <location>
        <begin position="1"/>
        <end position="155"/>
    </location>
</feature>
<feature type="binding site" evidence="1">
    <location>
        <position position="110"/>
    </location>
    <ligand>
        <name>Zn(2+)</name>
        <dbReference type="ChEBI" id="CHEBI:29105"/>
    </ligand>
</feature>
<feature type="binding site" evidence="1">
    <location>
        <position position="115"/>
    </location>
    <ligand>
        <name>Zn(2+)</name>
        <dbReference type="ChEBI" id="CHEBI:29105"/>
    </ligand>
</feature>
<feature type="binding site" evidence="1">
    <location>
        <position position="139"/>
    </location>
    <ligand>
        <name>Zn(2+)</name>
        <dbReference type="ChEBI" id="CHEBI:29105"/>
    </ligand>
</feature>
<feature type="binding site" evidence="1">
    <location>
        <position position="142"/>
    </location>
    <ligand>
        <name>Zn(2+)</name>
        <dbReference type="ChEBI" id="CHEBI:29105"/>
    </ligand>
</feature>
<gene>
    <name evidence="1" type="primary">pyrI</name>
    <name type="ordered locus">YPTB3532</name>
</gene>
<accession>Q665I5</accession>